<proteinExistence type="inferred from homology"/>
<name>GOSR1_CAEBR</name>
<sequence>MSETWEALRKKARSTENSIDVKLVSLNKLTASSHGGFDIDEKTVSSRQTTFRTVTTEIEGLIEQLTNINDDMNDVAGAQSSASWASNPAIQHTLRRHREILRDYGSEYRRARDNVDQVLQRELLLSSSNNESRNPAVNNRARGYDMYLKENDHINACDRLLDEQIEMAMSTKENVARQGINLRGISNRLHYITKKYPAINNLMQKIKTKKQKNTMILAGVISACLIFTIFWIIN</sequence>
<dbReference type="EMBL" id="HE601407">
    <property type="protein sequence ID" value="CAP33635.1"/>
    <property type="molecule type" value="Genomic_DNA"/>
</dbReference>
<dbReference type="SMR" id="A8XLW0"/>
<dbReference type="FunCoup" id="A8XLW0">
    <property type="interactions" value="2945"/>
</dbReference>
<dbReference type="STRING" id="6238.A8XLW0"/>
<dbReference type="EnsemblMetazoa" id="CBG15298.1">
    <property type="protein sequence ID" value="CBG15298.1"/>
    <property type="gene ID" value="WBGene00035605"/>
</dbReference>
<dbReference type="KEGG" id="cbr:CBG_15298"/>
<dbReference type="CTD" id="8585119"/>
<dbReference type="WormBase" id="CBG15298">
    <property type="protein sequence ID" value="CBP03713"/>
    <property type="gene ID" value="WBGene00035605"/>
    <property type="gene designation" value="Cbr-gos-28"/>
</dbReference>
<dbReference type="eggNOG" id="KOG3208">
    <property type="taxonomic scope" value="Eukaryota"/>
</dbReference>
<dbReference type="HOGENOM" id="CLU_078034_0_1_1"/>
<dbReference type="InParanoid" id="A8XLW0"/>
<dbReference type="OMA" id="EILRDYC"/>
<dbReference type="Proteomes" id="UP000008549">
    <property type="component" value="Unassembled WGS sequence"/>
</dbReference>
<dbReference type="GO" id="GO:0005801">
    <property type="term" value="C:cis-Golgi network"/>
    <property type="evidence" value="ECO:0007669"/>
    <property type="project" value="InterPro"/>
</dbReference>
<dbReference type="GO" id="GO:0005797">
    <property type="term" value="C:Golgi medial cisterna"/>
    <property type="evidence" value="ECO:0000318"/>
    <property type="project" value="GO_Central"/>
</dbReference>
<dbReference type="GO" id="GO:0000139">
    <property type="term" value="C:Golgi membrane"/>
    <property type="evidence" value="ECO:0000318"/>
    <property type="project" value="GO_Central"/>
</dbReference>
<dbReference type="GO" id="GO:0031201">
    <property type="term" value="C:SNARE complex"/>
    <property type="evidence" value="ECO:0000318"/>
    <property type="project" value="GO_Central"/>
</dbReference>
<dbReference type="GO" id="GO:0005484">
    <property type="term" value="F:SNAP receptor activity"/>
    <property type="evidence" value="ECO:0000318"/>
    <property type="project" value="GO_Central"/>
</dbReference>
<dbReference type="GO" id="GO:0006888">
    <property type="term" value="P:endoplasmic reticulum to Golgi vesicle-mediated transport"/>
    <property type="evidence" value="ECO:0000318"/>
    <property type="project" value="GO_Central"/>
</dbReference>
<dbReference type="GO" id="GO:0048219">
    <property type="term" value="P:inter-Golgi cisterna vesicle-mediated transport"/>
    <property type="evidence" value="ECO:0000318"/>
    <property type="project" value="GO_Central"/>
</dbReference>
<dbReference type="GO" id="GO:0015031">
    <property type="term" value="P:protein transport"/>
    <property type="evidence" value="ECO:0007669"/>
    <property type="project" value="UniProtKB-KW"/>
</dbReference>
<dbReference type="GO" id="GO:0006906">
    <property type="term" value="P:vesicle fusion"/>
    <property type="evidence" value="ECO:0000318"/>
    <property type="project" value="GO_Central"/>
</dbReference>
<dbReference type="InterPro" id="IPR023601">
    <property type="entry name" value="Golgi_SNAP_su1"/>
</dbReference>
<dbReference type="PANTHER" id="PTHR21094:SF2">
    <property type="entry name" value="GOLGI SNAP RECEPTOR COMPLEX MEMBER 1"/>
    <property type="match status" value="1"/>
</dbReference>
<dbReference type="PANTHER" id="PTHR21094">
    <property type="entry name" value="GOS-28 SNARE- RELATED"/>
    <property type="match status" value="1"/>
</dbReference>
<dbReference type="Pfam" id="PF12352">
    <property type="entry name" value="V-SNARE_C"/>
    <property type="match status" value="1"/>
</dbReference>
<dbReference type="PIRSF" id="PIRSF027109">
    <property type="entry name" value="Golgi_SNARE"/>
    <property type="match status" value="1"/>
</dbReference>
<reference evidence="4" key="1">
    <citation type="journal article" date="2003" name="PLoS Biol.">
        <title>The genome sequence of Caenorhabditis briggsae: a platform for comparative genomics.</title>
        <authorList>
            <person name="Stein L.D."/>
            <person name="Bao Z."/>
            <person name="Blasiar D."/>
            <person name="Blumenthal T."/>
            <person name="Brent M.R."/>
            <person name="Chen N."/>
            <person name="Chinwalla A."/>
            <person name="Clarke L."/>
            <person name="Clee C."/>
            <person name="Coghlan A."/>
            <person name="Coulson A."/>
            <person name="D'Eustachio P."/>
            <person name="Fitch D.H.A."/>
            <person name="Fulton L.A."/>
            <person name="Fulton R.E."/>
            <person name="Griffiths-Jones S."/>
            <person name="Harris T.W."/>
            <person name="Hillier L.W."/>
            <person name="Kamath R."/>
            <person name="Kuwabara P.E."/>
            <person name="Mardis E.R."/>
            <person name="Marra M.A."/>
            <person name="Miner T.L."/>
            <person name="Minx P."/>
            <person name="Mullikin J.C."/>
            <person name="Plumb R.W."/>
            <person name="Rogers J."/>
            <person name="Schein J.E."/>
            <person name="Sohrmann M."/>
            <person name="Spieth J."/>
            <person name="Stajich J.E."/>
            <person name="Wei C."/>
            <person name="Willey D."/>
            <person name="Wilson R.K."/>
            <person name="Durbin R.M."/>
            <person name="Waterston R.H."/>
        </authorList>
    </citation>
    <scope>NUCLEOTIDE SEQUENCE [LARGE SCALE GENOMIC DNA]</scope>
    <source>
        <strain evidence="4">AF16</strain>
    </source>
</reference>
<comment type="function">
    <text evidence="2">Involved in transport from the ER to the Golgi apparatus as well as in intra-Golgi transport. It belongs to a super-family of proteins called t-SNAREs or soluble NSF (N-ethylmaleimide-sensitive factor) attachment protein receptor. Cooperates with ykt-6 for proper expression of Golgi-resident proteins. Required along with ykt-6 for normal embryonic development, seam cell division or differentiation, and ray formation (By similarity).</text>
</comment>
<comment type="subunit">
    <text evidence="1">Component of several multiprotein Golgi SNARE complexes.</text>
</comment>
<comment type="subcellular location">
    <subcellularLocation>
        <location evidence="1">Golgi apparatus membrane</location>
        <topology evidence="1">Single-pass type IV membrane protein</topology>
    </subcellularLocation>
</comment>
<comment type="similarity">
    <text evidence="3">Belongs to the GOSR1 family.</text>
</comment>
<evidence type="ECO:0000250" key="1">
    <source>
        <dbReference type="UniProtKB" id="O95249"/>
    </source>
</evidence>
<evidence type="ECO:0000250" key="2">
    <source>
        <dbReference type="UniProtKB" id="Q95ZW1"/>
    </source>
</evidence>
<evidence type="ECO:0000255" key="3"/>
<evidence type="ECO:0000312" key="4">
    <source>
        <dbReference type="EMBL" id="CAP33635.1"/>
    </source>
</evidence>
<evidence type="ECO:0000312" key="5">
    <source>
        <dbReference type="WormBase" id="CBG15298"/>
    </source>
</evidence>
<gene>
    <name evidence="5" type="primary">gos-28</name>
    <name evidence="2" type="synonym">gosr-1</name>
    <name evidence="2" type="synonym">gs28</name>
    <name type="ORF">CBG15298</name>
</gene>
<accession>A8XLW0</accession>
<keyword id="KW-0175">Coiled coil</keyword>
<keyword id="KW-0931">ER-Golgi transport</keyword>
<keyword id="KW-0333">Golgi apparatus</keyword>
<keyword id="KW-0472">Membrane</keyword>
<keyword id="KW-0653">Protein transport</keyword>
<keyword id="KW-0675">Receptor</keyword>
<keyword id="KW-1185">Reference proteome</keyword>
<keyword id="KW-0812">Transmembrane</keyword>
<keyword id="KW-1133">Transmembrane helix</keyword>
<keyword id="KW-0813">Transport</keyword>
<organism>
    <name type="scientific">Caenorhabditis briggsae</name>
    <dbReference type="NCBI Taxonomy" id="6238"/>
    <lineage>
        <taxon>Eukaryota</taxon>
        <taxon>Metazoa</taxon>
        <taxon>Ecdysozoa</taxon>
        <taxon>Nematoda</taxon>
        <taxon>Chromadorea</taxon>
        <taxon>Rhabditida</taxon>
        <taxon>Rhabditina</taxon>
        <taxon>Rhabditomorpha</taxon>
        <taxon>Rhabditoidea</taxon>
        <taxon>Rhabditidae</taxon>
        <taxon>Peloderinae</taxon>
        <taxon>Caenorhabditis</taxon>
    </lineage>
</organism>
<protein>
    <recommendedName>
        <fullName evidence="2">Golgi SNAP receptor complex member 1</fullName>
    </recommendedName>
    <alternativeName>
        <fullName evidence="2">28 kDa Golgi SNARE protein</fullName>
        <shortName evidence="2">GOS-28</shortName>
    </alternativeName>
</protein>
<feature type="chain" id="PRO_0000415756" description="Golgi SNAP receptor complex member 1">
    <location>
        <begin position="1"/>
        <end position="234"/>
    </location>
</feature>
<feature type="topological domain" description="Cytoplasmic" evidence="2 3">
    <location>
        <begin position="1"/>
        <end position="212"/>
    </location>
</feature>
<feature type="transmembrane region" description="Helical; Anchor for type IV membrane protein" evidence="2 3">
    <location>
        <begin position="213"/>
        <end position="233"/>
    </location>
</feature>
<feature type="topological domain" description="Vesicular" evidence="2 3">
    <location>
        <position position="234"/>
    </location>
</feature>
<feature type="coiled-coil region" evidence="2 3">
    <location>
        <begin position="54"/>
        <end position="121"/>
    </location>
</feature>